<comment type="similarity">
    <text evidence="1">Belongs to the bacterial ribosomal protein bS16 family.</text>
</comment>
<dbReference type="EMBL" id="CP001615">
    <property type="protein sequence ID" value="ACQ71807.1"/>
    <property type="molecule type" value="Genomic_DNA"/>
</dbReference>
<dbReference type="RefSeq" id="WP_015881366.1">
    <property type="nucleotide sequence ID" value="NZ_MOEL01000013.1"/>
</dbReference>
<dbReference type="SMR" id="C4L601"/>
<dbReference type="STRING" id="360911.EAT1b_2893"/>
<dbReference type="GeneID" id="94372443"/>
<dbReference type="KEGG" id="eat:EAT1b_2893"/>
<dbReference type="eggNOG" id="COG0228">
    <property type="taxonomic scope" value="Bacteria"/>
</dbReference>
<dbReference type="HOGENOM" id="CLU_100590_5_0_9"/>
<dbReference type="OrthoDB" id="9807878at2"/>
<dbReference type="Proteomes" id="UP000000716">
    <property type="component" value="Chromosome"/>
</dbReference>
<dbReference type="GO" id="GO:0005737">
    <property type="term" value="C:cytoplasm"/>
    <property type="evidence" value="ECO:0007669"/>
    <property type="project" value="UniProtKB-ARBA"/>
</dbReference>
<dbReference type="GO" id="GO:0015935">
    <property type="term" value="C:small ribosomal subunit"/>
    <property type="evidence" value="ECO:0007669"/>
    <property type="project" value="TreeGrafter"/>
</dbReference>
<dbReference type="GO" id="GO:0003735">
    <property type="term" value="F:structural constituent of ribosome"/>
    <property type="evidence" value="ECO:0007669"/>
    <property type="project" value="InterPro"/>
</dbReference>
<dbReference type="GO" id="GO:0006412">
    <property type="term" value="P:translation"/>
    <property type="evidence" value="ECO:0007669"/>
    <property type="project" value="UniProtKB-UniRule"/>
</dbReference>
<dbReference type="FunFam" id="3.30.1320.10:FF:000002">
    <property type="entry name" value="30S ribosomal protein S16"/>
    <property type="match status" value="1"/>
</dbReference>
<dbReference type="Gene3D" id="3.30.1320.10">
    <property type="match status" value="1"/>
</dbReference>
<dbReference type="HAMAP" id="MF_00385">
    <property type="entry name" value="Ribosomal_bS16"/>
    <property type="match status" value="1"/>
</dbReference>
<dbReference type="InterPro" id="IPR000307">
    <property type="entry name" value="Ribosomal_bS16"/>
</dbReference>
<dbReference type="InterPro" id="IPR020592">
    <property type="entry name" value="Ribosomal_bS16_CS"/>
</dbReference>
<dbReference type="InterPro" id="IPR023803">
    <property type="entry name" value="Ribosomal_bS16_dom_sf"/>
</dbReference>
<dbReference type="NCBIfam" id="TIGR00002">
    <property type="entry name" value="S16"/>
    <property type="match status" value="1"/>
</dbReference>
<dbReference type="PANTHER" id="PTHR12919">
    <property type="entry name" value="30S RIBOSOMAL PROTEIN S16"/>
    <property type="match status" value="1"/>
</dbReference>
<dbReference type="PANTHER" id="PTHR12919:SF20">
    <property type="entry name" value="SMALL RIBOSOMAL SUBUNIT PROTEIN BS16M"/>
    <property type="match status" value="1"/>
</dbReference>
<dbReference type="Pfam" id="PF00886">
    <property type="entry name" value="Ribosomal_S16"/>
    <property type="match status" value="1"/>
</dbReference>
<dbReference type="SUPFAM" id="SSF54565">
    <property type="entry name" value="Ribosomal protein S16"/>
    <property type="match status" value="1"/>
</dbReference>
<dbReference type="PROSITE" id="PS00732">
    <property type="entry name" value="RIBOSOMAL_S16"/>
    <property type="match status" value="1"/>
</dbReference>
<feature type="chain" id="PRO_1000205760" description="Small ribosomal subunit protein bS16">
    <location>
        <begin position="1"/>
        <end position="91"/>
    </location>
</feature>
<name>RS16_EXISA</name>
<keyword id="KW-0687">Ribonucleoprotein</keyword>
<keyword id="KW-0689">Ribosomal protein</keyword>
<organism>
    <name type="scientific">Exiguobacterium sp. (strain ATCC BAA-1283 / AT1b)</name>
    <dbReference type="NCBI Taxonomy" id="360911"/>
    <lineage>
        <taxon>Bacteria</taxon>
        <taxon>Bacillati</taxon>
        <taxon>Bacillota</taxon>
        <taxon>Bacilli</taxon>
        <taxon>Bacillales</taxon>
        <taxon>Bacillales Family XII. Incertae Sedis</taxon>
        <taxon>Exiguobacterium</taxon>
    </lineage>
</organism>
<proteinExistence type="inferred from homology"/>
<accession>C4L601</accession>
<protein>
    <recommendedName>
        <fullName evidence="1">Small ribosomal subunit protein bS16</fullName>
    </recommendedName>
    <alternativeName>
        <fullName evidence="2">30S ribosomal protein S16</fullName>
    </alternativeName>
</protein>
<gene>
    <name evidence="1" type="primary">rpsP</name>
    <name type="ordered locus">EAT1b_2893</name>
</gene>
<reference key="1">
    <citation type="journal article" date="2011" name="J. Bacteriol.">
        <title>Complete genome sequence of the Thermophilic Bacterium Exiguobacterium sp. AT1b.</title>
        <authorList>
            <person name="Vishnivetskaya T.A."/>
            <person name="Lucas S."/>
            <person name="Copeland A."/>
            <person name="Lapidus A."/>
            <person name="Glavina del Rio T."/>
            <person name="Dalin E."/>
            <person name="Tice H."/>
            <person name="Bruce D.C."/>
            <person name="Goodwin L.A."/>
            <person name="Pitluck S."/>
            <person name="Saunders E."/>
            <person name="Brettin T."/>
            <person name="Detter C."/>
            <person name="Han C."/>
            <person name="Larimer F."/>
            <person name="Land M.L."/>
            <person name="Hauser L.J."/>
            <person name="Kyrpides N.C."/>
            <person name="Ovchinnikova G."/>
            <person name="Kathariou S."/>
            <person name="Ramaley R.F."/>
            <person name="Rodrigues D.F."/>
            <person name="Hendrix C."/>
            <person name="Richardson P."/>
            <person name="Tiedje J.M."/>
        </authorList>
    </citation>
    <scope>NUCLEOTIDE SEQUENCE [LARGE SCALE GENOMIC DNA]</scope>
    <source>
        <strain>ATCC BAA-1283 / AT1b</strain>
    </source>
</reference>
<sequence>MAVKIRLKRMGAKKSPFYRIVVADSRSPRDGRFIEQVGHYNPVAKPEAEVRINEELALKWLADGAKPSDTVRNLFSKAGIMEKFHNAKNAK</sequence>
<evidence type="ECO:0000255" key="1">
    <source>
        <dbReference type="HAMAP-Rule" id="MF_00385"/>
    </source>
</evidence>
<evidence type="ECO:0000305" key="2"/>